<organism>
    <name type="scientific">Salmonella gallinarum (strain 287/91 / NCTC 13346)</name>
    <dbReference type="NCBI Taxonomy" id="550538"/>
    <lineage>
        <taxon>Bacteria</taxon>
        <taxon>Pseudomonadati</taxon>
        <taxon>Pseudomonadota</taxon>
        <taxon>Gammaproteobacteria</taxon>
        <taxon>Enterobacterales</taxon>
        <taxon>Enterobacteriaceae</taxon>
        <taxon>Salmonella</taxon>
    </lineage>
</organism>
<protein>
    <recommendedName>
        <fullName evidence="1">Bifunctional protein Aas</fullName>
    </recommendedName>
    <domain>
        <recommendedName>
            <fullName evidence="1">2-acylglycerophosphoethanolamine acyltransferase</fullName>
            <ecNumber evidence="1">2.3.1.40</ecNumber>
        </recommendedName>
        <alternativeName>
            <fullName evidence="1">2-acyl-GPE acyltransferase</fullName>
        </alternativeName>
        <alternativeName>
            <fullName evidence="1">Acyl-[acyl-carrier-protein]--phospholipid O-acyltransferase</fullName>
        </alternativeName>
    </domain>
    <domain>
        <recommendedName>
            <fullName evidence="1">Acyl-[acyl-carrier-protein] synthetase</fullName>
            <ecNumber evidence="1">6.2.1.20</ecNumber>
        </recommendedName>
        <alternativeName>
            <fullName evidence="1">Acyl-ACP synthetase</fullName>
        </alternativeName>
        <alternativeName>
            <fullName evidence="1">Long-chain-fatty-acid--[acyl-carrier-protein] ligase</fullName>
        </alternativeName>
    </domain>
</protein>
<gene>
    <name evidence="1" type="primary">aas</name>
    <name type="ordered locus">SG2919</name>
</gene>
<dbReference type="EC" id="2.3.1.40" evidence="1"/>
<dbReference type="EC" id="6.2.1.20" evidence="1"/>
<dbReference type="EMBL" id="AM933173">
    <property type="protein sequence ID" value="CAR38724.1"/>
    <property type="molecule type" value="Genomic_DNA"/>
</dbReference>
<dbReference type="RefSeq" id="WP_000896087.1">
    <property type="nucleotide sequence ID" value="NC_011274.1"/>
</dbReference>
<dbReference type="SMR" id="B5RDY6"/>
<dbReference type="KEGG" id="seg:SG2919"/>
<dbReference type="HOGENOM" id="CLU_000022_59_8_6"/>
<dbReference type="Proteomes" id="UP000008321">
    <property type="component" value="Chromosome"/>
</dbReference>
<dbReference type="GO" id="GO:0005886">
    <property type="term" value="C:plasma membrane"/>
    <property type="evidence" value="ECO:0007669"/>
    <property type="project" value="UniProtKB-SubCell"/>
</dbReference>
<dbReference type="GO" id="GO:0008779">
    <property type="term" value="F:acyl-[acyl-carrier-protein]-phospholipid O-acyltransferase activity"/>
    <property type="evidence" value="ECO:0007669"/>
    <property type="project" value="UniProtKB-UniRule"/>
</dbReference>
<dbReference type="GO" id="GO:0005524">
    <property type="term" value="F:ATP binding"/>
    <property type="evidence" value="ECO:0007669"/>
    <property type="project" value="UniProtKB-KW"/>
</dbReference>
<dbReference type="GO" id="GO:0008922">
    <property type="term" value="F:long-chain fatty acid [acyl-carrier-protein] ligase activity"/>
    <property type="evidence" value="ECO:0007669"/>
    <property type="project" value="UniProtKB-UniRule"/>
</dbReference>
<dbReference type="GO" id="GO:0031956">
    <property type="term" value="F:medium-chain fatty acid-CoA ligase activity"/>
    <property type="evidence" value="ECO:0007669"/>
    <property type="project" value="TreeGrafter"/>
</dbReference>
<dbReference type="GO" id="GO:0006631">
    <property type="term" value="P:fatty acid metabolic process"/>
    <property type="evidence" value="ECO:0007669"/>
    <property type="project" value="InterPro"/>
</dbReference>
<dbReference type="GO" id="GO:0008654">
    <property type="term" value="P:phospholipid biosynthetic process"/>
    <property type="evidence" value="ECO:0007669"/>
    <property type="project" value="InterPro"/>
</dbReference>
<dbReference type="CDD" id="cd05909">
    <property type="entry name" value="AAS_C"/>
    <property type="match status" value="1"/>
</dbReference>
<dbReference type="CDD" id="cd07989">
    <property type="entry name" value="LPLAT_AGPAT-like"/>
    <property type="match status" value="1"/>
</dbReference>
<dbReference type="FunFam" id="3.30.300.30:FF:000009">
    <property type="entry name" value="Bifunctional protein Aas"/>
    <property type="match status" value="1"/>
</dbReference>
<dbReference type="FunFam" id="3.40.50.12780:FF:000009">
    <property type="entry name" value="Bifunctional protein Aas"/>
    <property type="match status" value="1"/>
</dbReference>
<dbReference type="Gene3D" id="3.30.300.30">
    <property type="match status" value="1"/>
</dbReference>
<dbReference type="Gene3D" id="3.40.50.12780">
    <property type="entry name" value="N-terminal domain of ligase-like"/>
    <property type="match status" value="1"/>
</dbReference>
<dbReference type="HAMAP" id="MF_01162">
    <property type="entry name" value="Aas"/>
    <property type="match status" value="1"/>
</dbReference>
<dbReference type="InterPro" id="IPR023775">
    <property type="entry name" value="Aas"/>
</dbReference>
<dbReference type="InterPro" id="IPR045851">
    <property type="entry name" value="AMP-bd_C_sf"/>
</dbReference>
<dbReference type="InterPro" id="IPR020845">
    <property type="entry name" value="AMP-binding_CS"/>
</dbReference>
<dbReference type="InterPro" id="IPR000873">
    <property type="entry name" value="AMP-dep_synth/lig_dom"/>
</dbReference>
<dbReference type="InterPro" id="IPR042099">
    <property type="entry name" value="ANL_N_sf"/>
</dbReference>
<dbReference type="InterPro" id="IPR002123">
    <property type="entry name" value="Plipid/glycerol_acylTrfase"/>
</dbReference>
<dbReference type="NCBIfam" id="NF005959">
    <property type="entry name" value="PRK08043.1"/>
    <property type="match status" value="1"/>
</dbReference>
<dbReference type="PANTHER" id="PTHR43201">
    <property type="entry name" value="ACYL-COA SYNTHETASE"/>
    <property type="match status" value="1"/>
</dbReference>
<dbReference type="PANTHER" id="PTHR43201:SF8">
    <property type="entry name" value="ACYL-COA SYNTHETASE FAMILY MEMBER 3"/>
    <property type="match status" value="1"/>
</dbReference>
<dbReference type="Pfam" id="PF01553">
    <property type="entry name" value="Acyltransferase"/>
    <property type="match status" value="1"/>
</dbReference>
<dbReference type="Pfam" id="PF00501">
    <property type="entry name" value="AMP-binding"/>
    <property type="match status" value="1"/>
</dbReference>
<dbReference type="SMART" id="SM00563">
    <property type="entry name" value="PlsC"/>
    <property type="match status" value="1"/>
</dbReference>
<dbReference type="SUPFAM" id="SSF56801">
    <property type="entry name" value="Acetyl-CoA synthetase-like"/>
    <property type="match status" value="1"/>
</dbReference>
<dbReference type="SUPFAM" id="SSF69593">
    <property type="entry name" value="Glycerol-3-phosphate (1)-acyltransferase"/>
    <property type="match status" value="1"/>
</dbReference>
<dbReference type="PROSITE" id="PS00455">
    <property type="entry name" value="AMP_BINDING"/>
    <property type="match status" value="1"/>
</dbReference>
<reference key="1">
    <citation type="journal article" date="2008" name="Genome Res.">
        <title>Comparative genome analysis of Salmonella enteritidis PT4 and Salmonella gallinarum 287/91 provides insights into evolutionary and host adaptation pathways.</title>
        <authorList>
            <person name="Thomson N.R."/>
            <person name="Clayton D.J."/>
            <person name="Windhorst D."/>
            <person name="Vernikos G."/>
            <person name="Davidson S."/>
            <person name="Churcher C."/>
            <person name="Quail M.A."/>
            <person name="Stevens M."/>
            <person name="Jones M.A."/>
            <person name="Watson M."/>
            <person name="Barron A."/>
            <person name="Layton A."/>
            <person name="Pickard D."/>
            <person name="Kingsley R.A."/>
            <person name="Bignell A."/>
            <person name="Clark L."/>
            <person name="Harris B."/>
            <person name="Ormond D."/>
            <person name="Abdellah Z."/>
            <person name="Brooks K."/>
            <person name="Cherevach I."/>
            <person name="Chillingworth T."/>
            <person name="Woodward J."/>
            <person name="Norberczak H."/>
            <person name="Lord A."/>
            <person name="Arrowsmith C."/>
            <person name="Jagels K."/>
            <person name="Moule S."/>
            <person name="Mungall K."/>
            <person name="Saunders M."/>
            <person name="Whitehead S."/>
            <person name="Chabalgoity J.A."/>
            <person name="Maskell D."/>
            <person name="Humphreys T."/>
            <person name="Roberts M."/>
            <person name="Barrow P.A."/>
            <person name="Dougan G."/>
            <person name="Parkhill J."/>
        </authorList>
    </citation>
    <scope>NUCLEOTIDE SEQUENCE [LARGE SCALE GENOMIC DNA]</scope>
    <source>
        <strain>287/91 / NCTC 13346</strain>
    </source>
</reference>
<proteinExistence type="inferred from homology"/>
<accession>B5RDY6</accession>
<comment type="function">
    <text evidence="1">Plays a role in lysophospholipid acylation. Transfers fatty acids to the 1-position via an enzyme-bound acyl-ACP intermediate in the presence of ATP and magnesium. Its physiological function is to regenerate phosphatidylethanolamine from 2-acyl-glycero-3-phosphoethanolamine (2-acyl-GPE) formed by transacylation reactions or degradation by phospholipase A1.</text>
</comment>
<comment type="catalytic activity">
    <reaction evidence="1">
        <text>a 2-acyl-sn-glycero-3-phosphoethanolamine + a fatty acyl-[ACP] = a 1,2-diacyl-sn-glycero-3-phosphoethanolamine + holo-[ACP]</text>
        <dbReference type="Rhea" id="RHEA:10304"/>
        <dbReference type="Rhea" id="RHEA-COMP:9685"/>
        <dbReference type="Rhea" id="RHEA-COMP:14125"/>
        <dbReference type="ChEBI" id="CHEBI:64479"/>
        <dbReference type="ChEBI" id="CHEBI:64612"/>
        <dbReference type="ChEBI" id="CHEBI:65213"/>
        <dbReference type="ChEBI" id="CHEBI:138651"/>
        <dbReference type="EC" id="2.3.1.40"/>
    </reaction>
</comment>
<comment type="catalytic activity">
    <reaction evidence="1">
        <text>a long-chain fatty acid + holo-[ACP] + ATP = a long-chain fatty acyl-[ACP] + AMP + diphosphate</text>
        <dbReference type="Rhea" id="RHEA:45588"/>
        <dbReference type="Rhea" id="RHEA-COMP:9685"/>
        <dbReference type="Rhea" id="RHEA-COMP:12682"/>
        <dbReference type="ChEBI" id="CHEBI:30616"/>
        <dbReference type="ChEBI" id="CHEBI:33019"/>
        <dbReference type="ChEBI" id="CHEBI:57560"/>
        <dbReference type="ChEBI" id="CHEBI:64479"/>
        <dbReference type="ChEBI" id="CHEBI:133243"/>
        <dbReference type="ChEBI" id="CHEBI:456215"/>
        <dbReference type="EC" id="6.2.1.20"/>
    </reaction>
</comment>
<comment type="subcellular location">
    <subcellularLocation>
        <location evidence="1">Cell inner membrane</location>
        <topology evidence="1">Multi-pass membrane protein</topology>
    </subcellularLocation>
</comment>
<comment type="similarity">
    <text evidence="1">In the N-terminal section; belongs to the 2-acyl-GPE acetyltransferase family.</text>
</comment>
<comment type="similarity">
    <text evidence="1">In the C-terminal section; belongs to the ATP-dependent AMP-binding enzyme family.</text>
</comment>
<evidence type="ECO:0000255" key="1">
    <source>
        <dbReference type="HAMAP-Rule" id="MF_01162"/>
    </source>
</evidence>
<sequence length="719" mass="80467">MLFGFFRNLFRVLYRVRVTGDVRALQGNRVLITPNHVSFIDGMLLALFLPVRPVFAVYTSISQQWYMRWLTPLIDFVPLDPTKPMSIKHLVRLVEQGRAVVIFPEGRISVTGSLMKIYDGAGFVAAKSGATVIPLRIDGAELTPFSRLKGLVKRRLFPRIQLHILPPTQIPMPEAPRARDRRKIAGEMLHQIMMEARMAVRPRETLYESLLAAQYRYGAGKNCIEDINFTPDTYRKLLTKTLFVGRILEKYSVEGEKIGLMLPNAAISAAVIFGAVSRRRIPAMMNYTAGVKGLTSAITAAEIKTIFTSRQFLDKGKLWHLPEQLTQVRWVYLEDLKADVTPADKLWIFAHLLAPRLAQVKQQPEDAAIILFTSGSEGHPKGVVHSHKSILANVEQIKTIADFTANDRFMSALPLFHSFGLTVGLFTPLLTGAEVFLYPSPLHYRIVPELVYDRNCTVLFGTSTFLGNYARFANPYDFYRLRYVVAGAEKLQESTKQLWQDKFGLRILEGYGVTECAPVVSINVPMAAKPGTVGRILPGMDARLLAVPGIENGGRLQLKGPNIMNGYLRVEKPGVLEVPSAENARGETERGWYDTGDIVRFDENGFVQIQGRAKRFAKIAGEMVSLEMVEQLALGVSADKMHATAIKSDASKGEALVLFTTDSELTREKLQHYAREHGIPELAVPRDIRYLKQLPLLGSGKPDFVTLKSWVDAPEQHHE</sequence>
<name>AAS_SALG2</name>
<keyword id="KW-0012">Acyltransferase</keyword>
<keyword id="KW-0067">ATP-binding</keyword>
<keyword id="KW-0997">Cell inner membrane</keyword>
<keyword id="KW-1003">Cell membrane</keyword>
<keyword id="KW-0436">Ligase</keyword>
<keyword id="KW-0472">Membrane</keyword>
<keyword id="KW-0511">Multifunctional enzyme</keyword>
<keyword id="KW-0547">Nucleotide-binding</keyword>
<keyword id="KW-0808">Transferase</keyword>
<keyword id="KW-0812">Transmembrane</keyword>
<keyword id="KW-1133">Transmembrane helix</keyword>
<feature type="chain" id="PRO_1000137898" description="Bifunctional protein Aas">
    <location>
        <begin position="1"/>
        <end position="719"/>
    </location>
</feature>
<feature type="transmembrane region" description="Helical" evidence="1">
    <location>
        <begin position="258"/>
        <end position="277"/>
    </location>
</feature>
<feature type="transmembrane region" description="Helical" evidence="1">
    <location>
        <begin position="409"/>
        <end position="433"/>
    </location>
</feature>
<feature type="region of interest" description="Acyltransferase">
    <location>
        <begin position="15"/>
        <end position="138"/>
    </location>
</feature>
<feature type="region of interest" description="AMP-binding">
    <location>
        <begin position="233"/>
        <end position="646"/>
    </location>
</feature>
<feature type="active site" evidence="1">
    <location>
        <position position="36"/>
    </location>
</feature>